<proteinExistence type="inferred from homology"/>
<feature type="chain" id="PRO_0000126527" description="Small ribosomal subunit protein uS8">
    <location>
        <begin position="1"/>
        <end position="132"/>
    </location>
</feature>
<evidence type="ECO:0000255" key="1">
    <source>
        <dbReference type="HAMAP-Rule" id="MF_01302"/>
    </source>
</evidence>
<evidence type="ECO:0000305" key="2"/>
<name>RS8_XANAC</name>
<dbReference type="EMBL" id="AE008923">
    <property type="protein sequence ID" value="AAM35869.1"/>
    <property type="molecule type" value="Genomic_DNA"/>
</dbReference>
<dbReference type="RefSeq" id="WP_005932726.1">
    <property type="nucleotide sequence ID" value="NC_003919.1"/>
</dbReference>
<dbReference type="SMR" id="Q8PNR3"/>
<dbReference type="GeneID" id="66910172"/>
<dbReference type="KEGG" id="xac:XAC0986"/>
<dbReference type="eggNOG" id="COG0096">
    <property type="taxonomic scope" value="Bacteria"/>
</dbReference>
<dbReference type="HOGENOM" id="CLU_098428_0_0_6"/>
<dbReference type="Proteomes" id="UP000000576">
    <property type="component" value="Chromosome"/>
</dbReference>
<dbReference type="GO" id="GO:1990904">
    <property type="term" value="C:ribonucleoprotein complex"/>
    <property type="evidence" value="ECO:0007669"/>
    <property type="project" value="UniProtKB-KW"/>
</dbReference>
<dbReference type="GO" id="GO:0005840">
    <property type="term" value="C:ribosome"/>
    <property type="evidence" value="ECO:0007669"/>
    <property type="project" value="UniProtKB-KW"/>
</dbReference>
<dbReference type="GO" id="GO:0019843">
    <property type="term" value="F:rRNA binding"/>
    <property type="evidence" value="ECO:0007669"/>
    <property type="project" value="UniProtKB-UniRule"/>
</dbReference>
<dbReference type="GO" id="GO:0003735">
    <property type="term" value="F:structural constituent of ribosome"/>
    <property type="evidence" value="ECO:0007669"/>
    <property type="project" value="InterPro"/>
</dbReference>
<dbReference type="GO" id="GO:0006412">
    <property type="term" value="P:translation"/>
    <property type="evidence" value="ECO:0007669"/>
    <property type="project" value="UniProtKB-UniRule"/>
</dbReference>
<dbReference type="FunFam" id="3.30.1370.30:FF:000003">
    <property type="entry name" value="30S ribosomal protein S8"/>
    <property type="match status" value="1"/>
</dbReference>
<dbReference type="FunFam" id="3.30.1490.10:FF:000001">
    <property type="entry name" value="30S ribosomal protein S8"/>
    <property type="match status" value="1"/>
</dbReference>
<dbReference type="Gene3D" id="3.30.1370.30">
    <property type="match status" value="1"/>
</dbReference>
<dbReference type="Gene3D" id="3.30.1490.10">
    <property type="match status" value="1"/>
</dbReference>
<dbReference type="HAMAP" id="MF_01302_B">
    <property type="entry name" value="Ribosomal_uS8_B"/>
    <property type="match status" value="1"/>
</dbReference>
<dbReference type="InterPro" id="IPR000630">
    <property type="entry name" value="Ribosomal_uS8"/>
</dbReference>
<dbReference type="InterPro" id="IPR047863">
    <property type="entry name" value="Ribosomal_uS8_CS"/>
</dbReference>
<dbReference type="InterPro" id="IPR035987">
    <property type="entry name" value="Ribosomal_uS8_sf"/>
</dbReference>
<dbReference type="NCBIfam" id="NF001109">
    <property type="entry name" value="PRK00136.1"/>
    <property type="match status" value="1"/>
</dbReference>
<dbReference type="PANTHER" id="PTHR11758">
    <property type="entry name" value="40S RIBOSOMAL PROTEIN S15A"/>
    <property type="match status" value="1"/>
</dbReference>
<dbReference type="Pfam" id="PF00410">
    <property type="entry name" value="Ribosomal_S8"/>
    <property type="match status" value="1"/>
</dbReference>
<dbReference type="SUPFAM" id="SSF56047">
    <property type="entry name" value="Ribosomal protein S8"/>
    <property type="match status" value="1"/>
</dbReference>
<dbReference type="PROSITE" id="PS00053">
    <property type="entry name" value="RIBOSOMAL_S8"/>
    <property type="match status" value="1"/>
</dbReference>
<sequence length="132" mass="14275">MSMTDPIADLLVRIKNAAAVGKQTVKLPSSKIKVAIAQVLKDEGYITDLRVTQAENNKAELEIVLKYFEGRPVIETLKRFSRSGLRQYRGKTELPKVLGGLGIAIISTSKGIMTDAQAREAGVGGEVLCFVA</sequence>
<comment type="function">
    <text evidence="1">One of the primary rRNA binding proteins, it binds directly to 16S rRNA central domain where it helps coordinate assembly of the platform of the 30S subunit.</text>
</comment>
<comment type="subunit">
    <text evidence="1">Part of the 30S ribosomal subunit. Contacts proteins S5 and S12.</text>
</comment>
<comment type="similarity">
    <text evidence="1">Belongs to the universal ribosomal protein uS8 family.</text>
</comment>
<organism>
    <name type="scientific">Xanthomonas axonopodis pv. citri (strain 306)</name>
    <dbReference type="NCBI Taxonomy" id="190486"/>
    <lineage>
        <taxon>Bacteria</taxon>
        <taxon>Pseudomonadati</taxon>
        <taxon>Pseudomonadota</taxon>
        <taxon>Gammaproteobacteria</taxon>
        <taxon>Lysobacterales</taxon>
        <taxon>Lysobacteraceae</taxon>
        <taxon>Xanthomonas</taxon>
    </lineage>
</organism>
<gene>
    <name evidence="1" type="primary">rpsH</name>
    <name type="ordered locus">XAC0986</name>
</gene>
<reference key="1">
    <citation type="journal article" date="2002" name="Nature">
        <title>Comparison of the genomes of two Xanthomonas pathogens with differing host specificities.</title>
        <authorList>
            <person name="da Silva A.C.R."/>
            <person name="Ferro J.A."/>
            <person name="Reinach F.C."/>
            <person name="Farah C.S."/>
            <person name="Furlan L.R."/>
            <person name="Quaggio R.B."/>
            <person name="Monteiro-Vitorello C.B."/>
            <person name="Van Sluys M.A."/>
            <person name="Almeida N.F. Jr."/>
            <person name="Alves L.M.C."/>
            <person name="do Amaral A.M."/>
            <person name="Bertolini M.C."/>
            <person name="Camargo L.E.A."/>
            <person name="Camarotte G."/>
            <person name="Cannavan F."/>
            <person name="Cardozo J."/>
            <person name="Chambergo F."/>
            <person name="Ciapina L.P."/>
            <person name="Cicarelli R.M.B."/>
            <person name="Coutinho L.L."/>
            <person name="Cursino-Santos J.R."/>
            <person name="El-Dorry H."/>
            <person name="Faria J.B."/>
            <person name="Ferreira A.J.S."/>
            <person name="Ferreira R.C.C."/>
            <person name="Ferro M.I.T."/>
            <person name="Formighieri E.F."/>
            <person name="Franco M.C."/>
            <person name="Greggio C.C."/>
            <person name="Gruber A."/>
            <person name="Katsuyama A.M."/>
            <person name="Kishi L.T."/>
            <person name="Leite R.P."/>
            <person name="Lemos E.G.M."/>
            <person name="Lemos M.V.F."/>
            <person name="Locali E.C."/>
            <person name="Machado M.A."/>
            <person name="Madeira A.M.B.N."/>
            <person name="Martinez-Rossi N.M."/>
            <person name="Martins E.C."/>
            <person name="Meidanis J."/>
            <person name="Menck C.F.M."/>
            <person name="Miyaki C.Y."/>
            <person name="Moon D.H."/>
            <person name="Moreira L.M."/>
            <person name="Novo M.T.M."/>
            <person name="Okura V.K."/>
            <person name="Oliveira M.C."/>
            <person name="Oliveira V.R."/>
            <person name="Pereira H.A."/>
            <person name="Rossi A."/>
            <person name="Sena J.A.D."/>
            <person name="Silva C."/>
            <person name="de Souza R.F."/>
            <person name="Spinola L.A.F."/>
            <person name="Takita M.A."/>
            <person name="Tamura R.E."/>
            <person name="Teixeira E.C."/>
            <person name="Tezza R.I.D."/>
            <person name="Trindade dos Santos M."/>
            <person name="Truffi D."/>
            <person name="Tsai S.M."/>
            <person name="White F.F."/>
            <person name="Setubal J.C."/>
            <person name="Kitajima J.P."/>
        </authorList>
    </citation>
    <scope>NUCLEOTIDE SEQUENCE [LARGE SCALE GENOMIC DNA]</scope>
    <source>
        <strain>306</strain>
    </source>
</reference>
<protein>
    <recommendedName>
        <fullName evidence="1">Small ribosomal subunit protein uS8</fullName>
    </recommendedName>
    <alternativeName>
        <fullName evidence="2">30S ribosomal protein S8</fullName>
    </alternativeName>
</protein>
<keyword id="KW-0687">Ribonucleoprotein</keyword>
<keyword id="KW-0689">Ribosomal protein</keyword>
<keyword id="KW-0694">RNA-binding</keyword>
<keyword id="KW-0699">rRNA-binding</keyword>
<accession>Q8PNR3</accession>